<sequence>MANTKSAIKRIKTIERNRIRNCAYKSVVKTFIKKYLKVLSDYTNAPNSNGVENIQTTLGIVYTKIDKAVKRGVYHSNKAARMKSKLALKYNVIKK</sequence>
<feature type="chain" id="PRO_0000168071" description="Small ribosomal subunit protein bS20c">
    <location>
        <begin position="1"/>
        <end position="95"/>
    </location>
</feature>
<organism>
    <name type="scientific">Cyanophora paradoxa</name>
    <dbReference type="NCBI Taxonomy" id="2762"/>
    <lineage>
        <taxon>Eukaryota</taxon>
        <taxon>Glaucocystophyceae</taxon>
        <taxon>Cyanophoraceae</taxon>
        <taxon>Cyanophora</taxon>
    </lineage>
</organism>
<keyword id="KW-0194">Cyanelle</keyword>
<keyword id="KW-0934">Plastid</keyword>
<keyword id="KW-0687">Ribonucleoprotein</keyword>
<keyword id="KW-0689">Ribosomal protein</keyword>
<keyword id="KW-0694">RNA-binding</keyword>
<keyword id="KW-0699">rRNA-binding</keyword>
<accession>P48140</accession>
<evidence type="ECO:0000250" key="1"/>
<evidence type="ECO:0000305" key="2"/>
<dbReference type="EMBL" id="U30821">
    <property type="protein sequence ID" value="AAA81248.1"/>
    <property type="molecule type" value="Genomic_DNA"/>
</dbReference>
<dbReference type="PIR" id="T06905">
    <property type="entry name" value="T06905"/>
</dbReference>
<dbReference type="RefSeq" id="NP_043217.1">
    <property type="nucleotide sequence ID" value="NC_001675.1"/>
</dbReference>
<dbReference type="SMR" id="P48140"/>
<dbReference type="GeneID" id="801540"/>
<dbReference type="GO" id="GO:0009842">
    <property type="term" value="C:cyanelle"/>
    <property type="evidence" value="ECO:0007669"/>
    <property type="project" value="UniProtKB-SubCell"/>
</dbReference>
<dbReference type="GO" id="GO:0005829">
    <property type="term" value="C:cytosol"/>
    <property type="evidence" value="ECO:0007669"/>
    <property type="project" value="TreeGrafter"/>
</dbReference>
<dbReference type="GO" id="GO:0015935">
    <property type="term" value="C:small ribosomal subunit"/>
    <property type="evidence" value="ECO:0007669"/>
    <property type="project" value="TreeGrafter"/>
</dbReference>
<dbReference type="GO" id="GO:0070181">
    <property type="term" value="F:small ribosomal subunit rRNA binding"/>
    <property type="evidence" value="ECO:0007669"/>
    <property type="project" value="TreeGrafter"/>
</dbReference>
<dbReference type="GO" id="GO:0003735">
    <property type="term" value="F:structural constituent of ribosome"/>
    <property type="evidence" value="ECO:0007669"/>
    <property type="project" value="InterPro"/>
</dbReference>
<dbReference type="GO" id="GO:0006412">
    <property type="term" value="P:translation"/>
    <property type="evidence" value="ECO:0007669"/>
    <property type="project" value="InterPro"/>
</dbReference>
<dbReference type="FunFam" id="1.20.58.110:FF:000001">
    <property type="entry name" value="30S ribosomal protein S20"/>
    <property type="match status" value="1"/>
</dbReference>
<dbReference type="Gene3D" id="1.20.58.110">
    <property type="entry name" value="Ribosomal protein S20"/>
    <property type="match status" value="1"/>
</dbReference>
<dbReference type="HAMAP" id="MF_00500">
    <property type="entry name" value="Ribosomal_bS20"/>
    <property type="match status" value="1"/>
</dbReference>
<dbReference type="InterPro" id="IPR002583">
    <property type="entry name" value="Ribosomal_bS20"/>
</dbReference>
<dbReference type="InterPro" id="IPR036510">
    <property type="entry name" value="Ribosomal_bS20_sf"/>
</dbReference>
<dbReference type="NCBIfam" id="TIGR00029">
    <property type="entry name" value="S20"/>
    <property type="match status" value="1"/>
</dbReference>
<dbReference type="PANTHER" id="PTHR33398">
    <property type="entry name" value="30S RIBOSOMAL PROTEIN S20"/>
    <property type="match status" value="1"/>
</dbReference>
<dbReference type="PANTHER" id="PTHR33398:SF1">
    <property type="entry name" value="SMALL RIBOSOMAL SUBUNIT PROTEIN BS20C"/>
    <property type="match status" value="1"/>
</dbReference>
<dbReference type="Pfam" id="PF01649">
    <property type="entry name" value="Ribosomal_S20p"/>
    <property type="match status" value="1"/>
</dbReference>
<dbReference type="SUPFAM" id="SSF46992">
    <property type="entry name" value="Ribosomal protein S20"/>
    <property type="match status" value="1"/>
</dbReference>
<reference key="1">
    <citation type="journal article" date="1995" name="Plant Mol. Biol. Rep.">
        <title>Nucleotide sequence of the cyanelle DNA from Cyanophora paradoxa.</title>
        <authorList>
            <person name="Stirewalt V.L."/>
            <person name="Michalowski C.B."/>
            <person name="Loeffelhardt W."/>
            <person name="Bohnert H.J."/>
            <person name="Bryant D.A."/>
        </authorList>
    </citation>
    <scope>NUCLEOTIDE SEQUENCE [LARGE SCALE GENOMIC DNA]</scope>
    <source>
        <strain>UTEX LB 555 / Pringsheim</strain>
    </source>
</reference>
<reference key="2">
    <citation type="book" date="1997" name="Eukaryotism and symbiosis">
        <title>The complete sequence of the cyanelle genome of Cyanophora paradoxa: the genetic complexity of a primitive plastid.</title>
        <editorList>
            <person name="Schenk H.E.A."/>
            <person name="Herrmann R."/>
            <person name="Jeon K.W."/>
            <person name="Mueller N.E."/>
            <person name="Schwemmler W."/>
        </editorList>
        <authorList>
            <person name="Loeffelhardt W."/>
            <person name="Stirewalt V.L."/>
            <person name="Michalowski C.B."/>
            <person name="Annarella M."/>
            <person name="Farley J.Y."/>
            <person name="Schluchter W.M."/>
            <person name="Chung S."/>
            <person name="Newmann-Spallart C."/>
            <person name="Steiner J.M."/>
            <person name="Jakowitsch J."/>
            <person name="Bohnert H.J."/>
            <person name="Bryant D.A."/>
        </authorList>
    </citation>
    <scope>NUCLEOTIDE SEQUENCE [LARGE SCALE GENOMIC DNA]</scope>
    <source>
        <strain>UTEX LB 555 / Pringsheim</strain>
    </source>
</reference>
<protein>
    <recommendedName>
        <fullName evidence="2">Small ribosomal subunit protein bS20c</fullName>
    </recommendedName>
    <alternativeName>
        <fullName>Cyanelle 30S ribosomal protein S20</fullName>
    </alternativeName>
</protein>
<comment type="function">
    <text evidence="1">Binds directly to 16S ribosomal RNA.</text>
</comment>
<comment type="subcellular location">
    <subcellularLocation>
        <location>Plastid</location>
        <location>Cyanelle</location>
    </subcellularLocation>
</comment>
<comment type="similarity">
    <text evidence="2">Belongs to the bacterial ribosomal protein bS20 family.</text>
</comment>
<gene>
    <name type="primary">rps20</name>
</gene>
<name>RR20_CYAPA</name>
<proteinExistence type="inferred from homology"/>
<geneLocation type="cyanelle"/>